<protein>
    <recommendedName>
        <fullName evidence="1">Elongation factor G</fullName>
        <shortName evidence="1">EF-G</shortName>
    </recommendedName>
</protein>
<proteinExistence type="inferred from homology"/>
<organism>
    <name type="scientific">Staphylococcus carnosus (strain TM300)</name>
    <dbReference type="NCBI Taxonomy" id="396513"/>
    <lineage>
        <taxon>Bacteria</taxon>
        <taxon>Bacillati</taxon>
        <taxon>Bacillota</taxon>
        <taxon>Bacilli</taxon>
        <taxon>Bacillales</taxon>
        <taxon>Staphylococcaceae</taxon>
        <taxon>Staphylococcus</taxon>
    </lineage>
</organism>
<feature type="chain" id="PRO_1000201486" description="Elongation factor G">
    <location>
        <begin position="1"/>
        <end position="693"/>
    </location>
</feature>
<feature type="domain" description="tr-type G">
    <location>
        <begin position="8"/>
        <end position="282"/>
    </location>
</feature>
<feature type="binding site" evidence="1">
    <location>
        <begin position="17"/>
        <end position="24"/>
    </location>
    <ligand>
        <name>GTP</name>
        <dbReference type="ChEBI" id="CHEBI:37565"/>
    </ligand>
</feature>
<feature type="binding site" evidence="1">
    <location>
        <begin position="81"/>
        <end position="85"/>
    </location>
    <ligand>
        <name>GTP</name>
        <dbReference type="ChEBI" id="CHEBI:37565"/>
    </ligand>
</feature>
<feature type="binding site" evidence="1">
    <location>
        <begin position="135"/>
        <end position="138"/>
    </location>
    <ligand>
        <name>GTP</name>
        <dbReference type="ChEBI" id="CHEBI:37565"/>
    </ligand>
</feature>
<name>EFG_STACT</name>
<accession>B9DKV7</accession>
<dbReference type="EMBL" id="AM295250">
    <property type="protein sequence ID" value="CAL27119.1"/>
    <property type="molecule type" value="Genomic_DNA"/>
</dbReference>
<dbReference type="RefSeq" id="WP_012664234.1">
    <property type="nucleotide sequence ID" value="NC_012121.1"/>
</dbReference>
<dbReference type="SMR" id="B9DKV7"/>
<dbReference type="GeneID" id="93795135"/>
<dbReference type="KEGG" id="sca:SCA_0206"/>
<dbReference type="eggNOG" id="COG0480">
    <property type="taxonomic scope" value="Bacteria"/>
</dbReference>
<dbReference type="HOGENOM" id="CLU_002794_4_1_9"/>
<dbReference type="OrthoDB" id="9804431at2"/>
<dbReference type="BioCyc" id="SCAR396513:SCA_RS01055-MONOMER"/>
<dbReference type="Proteomes" id="UP000000444">
    <property type="component" value="Chromosome"/>
</dbReference>
<dbReference type="GO" id="GO:0005737">
    <property type="term" value="C:cytoplasm"/>
    <property type="evidence" value="ECO:0007669"/>
    <property type="project" value="UniProtKB-SubCell"/>
</dbReference>
<dbReference type="GO" id="GO:0005525">
    <property type="term" value="F:GTP binding"/>
    <property type="evidence" value="ECO:0007669"/>
    <property type="project" value="UniProtKB-UniRule"/>
</dbReference>
<dbReference type="GO" id="GO:0003924">
    <property type="term" value="F:GTPase activity"/>
    <property type="evidence" value="ECO:0007669"/>
    <property type="project" value="InterPro"/>
</dbReference>
<dbReference type="GO" id="GO:0003746">
    <property type="term" value="F:translation elongation factor activity"/>
    <property type="evidence" value="ECO:0007669"/>
    <property type="project" value="UniProtKB-UniRule"/>
</dbReference>
<dbReference type="GO" id="GO:0032790">
    <property type="term" value="P:ribosome disassembly"/>
    <property type="evidence" value="ECO:0007669"/>
    <property type="project" value="TreeGrafter"/>
</dbReference>
<dbReference type="CDD" id="cd01886">
    <property type="entry name" value="EF-G"/>
    <property type="match status" value="1"/>
</dbReference>
<dbReference type="CDD" id="cd16262">
    <property type="entry name" value="EFG_III"/>
    <property type="match status" value="1"/>
</dbReference>
<dbReference type="CDD" id="cd01434">
    <property type="entry name" value="EFG_mtEFG1_IV"/>
    <property type="match status" value="1"/>
</dbReference>
<dbReference type="CDD" id="cd03713">
    <property type="entry name" value="EFG_mtEFG_C"/>
    <property type="match status" value="1"/>
</dbReference>
<dbReference type="CDD" id="cd04088">
    <property type="entry name" value="EFG_mtEFG_II"/>
    <property type="match status" value="1"/>
</dbReference>
<dbReference type="FunFam" id="2.40.30.10:FF:000006">
    <property type="entry name" value="Elongation factor G"/>
    <property type="match status" value="1"/>
</dbReference>
<dbReference type="FunFam" id="3.30.230.10:FF:000003">
    <property type="entry name" value="Elongation factor G"/>
    <property type="match status" value="1"/>
</dbReference>
<dbReference type="FunFam" id="3.30.70.240:FF:000001">
    <property type="entry name" value="Elongation factor G"/>
    <property type="match status" value="1"/>
</dbReference>
<dbReference type="FunFam" id="3.30.70.870:FF:000001">
    <property type="entry name" value="Elongation factor G"/>
    <property type="match status" value="1"/>
</dbReference>
<dbReference type="FunFam" id="3.40.50.300:FF:000029">
    <property type="entry name" value="Elongation factor G"/>
    <property type="match status" value="1"/>
</dbReference>
<dbReference type="Gene3D" id="3.30.230.10">
    <property type="match status" value="1"/>
</dbReference>
<dbReference type="Gene3D" id="3.30.70.240">
    <property type="match status" value="1"/>
</dbReference>
<dbReference type="Gene3D" id="3.30.70.870">
    <property type="entry name" value="Elongation Factor G (Translational Gtpase), domain 3"/>
    <property type="match status" value="1"/>
</dbReference>
<dbReference type="Gene3D" id="3.40.50.300">
    <property type="entry name" value="P-loop containing nucleotide triphosphate hydrolases"/>
    <property type="match status" value="1"/>
</dbReference>
<dbReference type="Gene3D" id="2.40.30.10">
    <property type="entry name" value="Translation factors"/>
    <property type="match status" value="1"/>
</dbReference>
<dbReference type="HAMAP" id="MF_00054_B">
    <property type="entry name" value="EF_G_EF_2_B"/>
    <property type="match status" value="1"/>
</dbReference>
<dbReference type="InterPro" id="IPR053905">
    <property type="entry name" value="EF-G-like_DII"/>
</dbReference>
<dbReference type="InterPro" id="IPR041095">
    <property type="entry name" value="EFG_II"/>
</dbReference>
<dbReference type="InterPro" id="IPR009022">
    <property type="entry name" value="EFG_III"/>
</dbReference>
<dbReference type="InterPro" id="IPR035647">
    <property type="entry name" value="EFG_III/V"/>
</dbReference>
<dbReference type="InterPro" id="IPR047872">
    <property type="entry name" value="EFG_IV"/>
</dbReference>
<dbReference type="InterPro" id="IPR035649">
    <property type="entry name" value="EFG_V"/>
</dbReference>
<dbReference type="InterPro" id="IPR000640">
    <property type="entry name" value="EFG_V-like"/>
</dbReference>
<dbReference type="InterPro" id="IPR031157">
    <property type="entry name" value="G_TR_CS"/>
</dbReference>
<dbReference type="InterPro" id="IPR027417">
    <property type="entry name" value="P-loop_NTPase"/>
</dbReference>
<dbReference type="InterPro" id="IPR020568">
    <property type="entry name" value="Ribosomal_Su5_D2-typ_SF"/>
</dbReference>
<dbReference type="InterPro" id="IPR014721">
    <property type="entry name" value="Ribsml_uS5_D2-typ_fold_subgr"/>
</dbReference>
<dbReference type="InterPro" id="IPR005225">
    <property type="entry name" value="Small_GTP-bd"/>
</dbReference>
<dbReference type="InterPro" id="IPR000795">
    <property type="entry name" value="T_Tr_GTP-bd_dom"/>
</dbReference>
<dbReference type="InterPro" id="IPR009000">
    <property type="entry name" value="Transl_B-barrel_sf"/>
</dbReference>
<dbReference type="InterPro" id="IPR004540">
    <property type="entry name" value="Transl_elong_EFG/EF2"/>
</dbReference>
<dbReference type="InterPro" id="IPR005517">
    <property type="entry name" value="Transl_elong_EFG/EF2_IV"/>
</dbReference>
<dbReference type="NCBIfam" id="TIGR00484">
    <property type="entry name" value="EF-G"/>
    <property type="match status" value="1"/>
</dbReference>
<dbReference type="NCBIfam" id="NF009379">
    <property type="entry name" value="PRK12740.1-3"/>
    <property type="match status" value="1"/>
</dbReference>
<dbReference type="NCBIfam" id="NF009381">
    <property type="entry name" value="PRK12740.1-5"/>
    <property type="match status" value="1"/>
</dbReference>
<dbReference type="NCBIfam" id="TIGR00231">
    <property type="entry name" value="small_GTP"/>
    <property type="match status" value="1"/>
</dbReference>
<dbReference type="PANTHER" id="PTHR43261:SF1">
    <property type="entry name" value="RIBOSOME-RELEASING FACTOR 2, MITOCHONDRIAL"/>
    <property type="match status" value="1"/>
</dbReference>
<dbReference type="PANTHER" id="PTHR43261">
    <property type="entry name" value="TRANSLATION ELONGATION FACTOR G-RELATED"/>
    <property type="match status" value="1"/>
</dbReference>
<dbReference type="Pfam" id="PF22042">
    <property type="entry name" value="EF-G_D2"/>
    <property type="match status" value="1"/>
</dbReference>
<dbReference type="Pfam" id="PF00679">
    <property type="entry name" value="EFG_C"/>
    <property type="match status" value="1"/>
</dbReference>
<dbReference type="Pfam" id="PF14492">
    <property type="entry name" value="EFG_III"/>
    <property type="match status" value="1"/>
</dbReference>
<dbReference type="Pfam" id="PF03764">
    <property type="entry name" value="EFG_IV"/>
    <property type="match status" value="1"/>
</dbReference>
<dbReference type="Pfam" id="PF00009">
    <property type="entry name" value="GTP_EFTU"/>
    <property type="match status" value="1"/>
</dbReference>
<dbReference type="PRINTS" id="PR00315">
    <property type="entry name" value="ELONGATNFCT"/>
</dbReference>
<dbReference type="SMART" id="SM00838">
    <property type="entry name" value="EFG_C"/>
    <property type="match status" value="1"/>
</dbReference>
<dbReference type="SMART" id="SM00889">
    <property type="entry name" value="EFG_IV"/>
    <property type="match status" value="1"/>
</dbReference>
<dbReference type="SUPFAM" id="SSF54980">
    <property type="entry name" value="EF-G C-terminal domain-like"/>
    <property type="match status" value="2"/>
</dbReference>
<dbReference type="SUPFAM" id="SSF52540">
    <property type="entry name" value="P-loop containing nucleoside triphosphate hydrolases"/>
    <property type="match status" value="1"/>
</dbReference>
<dbReference type="SUPFAM" id="SSF54211">
    <property type="entry name" value="Ribosomal protein S5 domain 2-like"/>
    <property type="match status" value="1"/>
</dbReference>
<dbReference type="SUPFAM" id="SSF50447">
    <property type="entry name" value="Translation proteins"/>
    <property type="match status" value="1"/>
</dbReference>
<dbReference type="PROSITE" id="PS00301">
    <property type="entry name" value="G_TR_1"/>
    <property type="match status" value="1"/>
</dbReference>
<dbReference type="PROSITE" id="PS51722">
    <property type="entry name" value="G_TR_2"/>
    <property type="match status" value="1"/>
</dbReference>
<reference key="1">
    <citation type="journal article" date="2009" name="Appl. Environ. Microbiol.">
        <title>Genome analysis of the meat starter culture bacterium Staphylococcus carnosus TM300.</title>
        <authorList>
            <person name="Rosenstein R."/>
            <person name="Nerz C."/>
            <person name="Biswas L."/>
            <person name="Resch A."/>
            <person name="Raddatz G."/>
            <person name="Schuster S.C."/>
            <person name="Goetz F."/>
        </authorList>
    </citation>
    <scope>NUCLEOTIDE SEQUENCE [LARGE SCALE GENOMIC DNA]</scope>
    <source>
        <strain>TM300</strain>
    </source>
</reference>
<gene>
    <name evidence="1" type="primary">fusA</name>
    <name type="ordered locus">Sca_0206</name>
</gene>
<keyword id="KW-0963">Cytoplasm</keyword>
<keyword id="KW-0251">Elongation factor</keyword>
<keyword id="KW-0342">GTP-binding</keyword>
<keyword id="KW-0547">Nucleotide-binding</keyword>
<keyword id="KW-0648">Protein biosynthesis</keyword>
<keyword id="KW-1185">Reference proteome</keyword>
<comment type="function">
    <text evidence="1">Catalyzes the GTP-dependent ribosomal translocation step during translation elongation. During this step, the ribosome changes from the pre-translocational (PRE) to the post-translocational (POST) state as the newly formed A-site-bound peptidyl-tRNA and P-site-bound deacylated tRNA move to the P and E sites, respectively. Catalyzes the coordinated movement of the two tRNA molecules, the mRNA and conformational changes in the ribosome.</text>
</comment>
<comment type="subcellular location">
    <subcellularLocation>
        <location evidence="1">Cytoplasm</location>
    </subcellularLocation>
</comment>
<comment type="similarity">
    <text evidence="1">Belongs to the TRAFAC class translation factor GTPase superfamily. Classic translation factor GTPase family. EF-G/EF-2 subfamily.</text>
</comment>
<sequence length="693" mass="76836">MARDFSLEKTRNIGIMAHIDAGKTTTTERILYYTGRIHKIGETHEGASQMDWMEQEQDRGITITSAATTAQWHDYRVNIIDTPGHVDFTVEVERSLRVLDGAVTVLDAQSGVEPQTETVWRQATTYGVPRIVFVNKMDKLGANFEYSVSTLHDRLQANAQPIQLPIGAEDEFEAIIDLVTMKCYQYNGDFGEEVVEIEIPDDYKDKAAEARESLIEAVAEANEDLMEKYLEGEEITIDELKAAIRQATLDIEFYPVLCGTAFKNKGVQLMLDAVIDYLPSPLDVKPIVGHHADNPDEEVIAPADDDADFAALAFKVMTDPYVGKLTFFRVYSGTLNSGSYVKNSTKDKRERVGRLLQMHANTRKEISTVYSGDIAAAVGLKETGTGDTLCGEKNDIILESMEFPEPVIHLSVEPKSKADQDKMTQALVKLQEEDPTFHAHTDEETGQVIIGGMGELHLDILVDRMKKEFNVEANVGAPMVSYRETFKTPAKVQGKFSRQSGGRGQYGDVHIEFTPNEVGAGFEFENAIVGGVVPREYIPSVEAGLKDAMENGVVAGYPLIDVKAKLYDGSYHDVDSSEMAFKIAASLALKEAAKVADPVILEPMMKVEILMPEEYMGDIMGDVTSRRGRVDGMEARGNAQMVRAFVPLSEMFGYATSLRSNTQGRGTYTMYFDHYEEVPKSIAEDIIKKNKGE</sequence>
<evidence type="ECO:0000255" key="1">
    <source>
        <dbReference type="HAMAP-Rule" id="MF_00054"/>
    </source>
</evidence>